<reference key="1">
    <citation type="journal article" date="2008" name="PLoS Genet.">
        <title>Complete genome sequence of the N2-fixing broad host range endophyte Klebsiella pneumoniae 342 and virulence predictions verified in mice.</title>
        <authorList>
            <person name="Fouts D.E."/>
            <person name="Tyler H.L."/>
            <person name="DeBoy R.T."/>
            <person name="Daugherty S."/>
            <person name="Ren Q."/>
            <person name="Badger J.H."/>
            <person name="Durkin A.S."/>
            <person name="Huot H."/>
            <person name="Shrivastava S."/>
            <person name="Kothari S."/>
            <person name="Dodson R.J."/>
            <person name="Mohamoud Y."/>
            <person name="Khouri H."/>
            <person name="Roesch L.F.W."/>
            <person name="Krogfelt K.A."/>
            <person name="Struve C."/>
            <person name="Triplett E.W."/>
            <person name="Methe B.A."/>
        </authorList>
    </citation>
    <scope>NUCLEOTIDE SEQUENCE [LARGE SCALE GENOMIC DNA]</scope>
    <source>
        <strain>342</strain>
    </source>
</reference>
<protein>
    <recommendedName>
        <fullName evidence="1">D-ribose pyranase</fullName>
        <ecNumber evidence="1">5.4.99.62</ecNumber>
    </recommendedName>
</protein>
<dbReference type="EC" id="5.4.99.62" evidence="1"/>
<dbReference type="EMBL" id="CP000964">
    <property type="protein sequence ID" value="ACI08748.1"/>
    <property type="molecule type" value="Genomic_DNA"/>
</dbReference>
<dbReference type="SMR" id="B5XZK8"/>
<dbReference type="KEGG" id="kpe:KPK_5528"/>
<dbReference type="HOGENOM" id="CLU_135498_0_0_6"/>
<dbReference type="UniPathway" id="UPA00916">
    <property type="reaction ID" value="UER00888"/>
</dbReference>
<dbReference type="Proteomes" id="UP000001734">
    <property type="component" value="Chromosome"/>
</dbReference>
<dbReference type="GO" id="GO:0005829">
    <property type="term" value="C:cytosol"/>
    <property type="evidence" value="ECO:0007669"/>
    <property type="project" value="TreeGrafter"/>
</dbReference>
<dbReference type="GO" id="GO:0062193">
    <property type="term" value="F:D-ribose pyranase activity"/>
    <property type="evidence" value="ECO:0007669"/>
    <property type="project" value="UniProtKB-EC"/>
</dbReference>
<dbReference type="GO" id="GO:0016872">
    <property type="term" value="F:intramolecular lyase activity"/>
    <property type="evidence" value="ECO:0007669"/>
    <property type="project" value="UniProtKB-UniRule"/>
</dbReference>
<dbReference type="GO" id="GO:0048029">
    <property type="term" value="F:monosaccharide binding"/>
    <property type="evidence" value="ECO:0007669"/>
    <property type="project" value="InterPro"/>
</dbReference>
<dbReference type="GO" id="GO:0019303">
    <property type="term" value="P:D-ribose catabolic process"/>
    <property type="evidence" value="ECO:0007669"/>
    <property type="project" value="UniProtKB-UniRule"/>
</dbReference>
<dbReference type="FunFam" id="3.40.1650.10:FF:000002">
    <property type="entry name" value="D-ribose pyranase"/>
    <property type="match status" value="1"/>
</dbReference>
<dbReference type="Gene3D" id="3.40.1650.10">
    <property type="entry name" value="RbsD-like domain"/>
    <property type="match status" value="1"/>
</dbReference>
<dbReference type="HAMAP" id="MF_01661">
    <property type="entry name" value="D_rib_pyranase"/>
    <property type="match status" value="1"/>
</dbReference>
<dbReference type="InterPro" id="IPR023064">
    <property type="entry name" value="D-ribose_pyranase"/>
</dbReference>
<dbReference type="InterPro" id="IPR023750">
    <property type="entry name" value="RbsD-like_sf"/>
</dbReference>
<dbReference type="InterPro" id="IPR007721">
    <property type="entry name" value="RbsD_FucU"/>
</dbReference>
<dbReference type="NCBIfam" id="NF008761">
    <property type="entry name" value="PRK11797.1"/>
    <property type="match status" value="1"/>
</dbReference>
<dbReference type="PANTHER" id="PTHR37831">
    <property type="entry name" value="D-RIBOSE PYRANASE"/>
    <property type="match status" value="1"/>
</dbReference>
<dbReference type="PANTHER" id="PTHR37831:SF1">
    <property type="entry name" value="D-RIBOSE PYRANASE"/>
    <property type="match status" value="1"/>
</dbReference>
<dbReference type="Pfam" id="PF05025">
    <property type="entry name" value="RbsD_FucU"/>
    <property type="match status" value="1"/>
</dbReference>
<dbReference type="SUPFAM" id="SSF102546">
    <property type="entry name" value="RbsD-like"/>
    <property type="match status" value="1"/>
</dbReference>
<comment type="function">
    <text evidence="1">Catalyzes the interconversion of beta-pyran and beta-furan forms of D-ribose.</text>
</comment>
<comment type="catalytic activity">
    <reaction evidence="1">
        <text>beta-D-ribopyranose = beta-D-ribofuranose</text>
        <dbReference type="Rhea" id="RHEA:25432"/>
        <dbReference type="ChEBI" id="CHEBI:27476"/>
        <dbReference type="ChEBI" id="CHEBI:47002"/>
        <dbReference type="EC" id="5.4.99.62"/>
    </reaction>
</comment>
<comment type="pathway">
    <text evidence="1">Carbohydrate metabolism; D-ribose degradation; D-ribose 5-phosphate from beta-D-ribopyranose: step 1/2.</text>
</comment>
<comment type="subunit">
    <text evidence="1">Homodecamer.</text>
</comment>
<comment type="subcellular location">
    <subcellularLocation>
        <location evidence="1">Cytoplasm</location>
    </subcellularLocation>
</comment>
<comment type="similarity">
    <text evidence="1">Belongs to the RbsD / FucU family. RbsD subfamily.</text>
</comment>
<proteinExistence type="inferred from homology"/>
<name>RBSD_KLEP3</name>
<feature type="chain" id="PRO_1000187151" description="D-ribose pyranase">
    <location>
        <begin position="1"/>
        <end position="139"/>
    </location>
</feature>
<feature type="active site" description="Proton donor" evidence="1">
    <location>
        <position position="20"/>
    </location>
</feature>
<feature type="binding site" evidence="1">
    <location>
        <position position="28"/>
    </location>
    <ligand>
        <name>substrate</name>
    </ligand>
</feature>
<feature type="binding site" evidence="1">
    <location>
        <position position="106"/>
    </location>
    <ligand>
        <name>substrate</name>
    </ligand>
</feature>
<feature type="binding site" evidence="1">
    <location>
        <begin position="128"/>
        <end position="130"/>
    </location>
    <ligand>
        <name>substrate</name>
    </ligand>
</feature>
<gene>
    <name evidence="1" type="primary">rbsD</name>
    <name type="ordered locus">KPK_5528</name>
</gene>
<accession>B5XZK8</accession>
<sequence>MKKGTVLNADISAVISRLGHTDTLVVCDAGLPVPRSSTRIDMALTQGVPSFMQVLEVVTTEMQVEAAVIAEEIKTHNPQLHATLLTHLEQLQQHQGNTIEIRYTSHEQFKKQTADSQAVIRSGECSPFANIILCAGVTF</sequence>
<keyword id="KW-0119">Carbohydrate metabolism</keyword>
<keyword id="KW-0963">Cytoplasm</keyword>
<keyword id="KW-0413">Isomerase</keyword>
<evidence type="ECO:0000255" key="1">
    <source>
        <dbReference type="HAMAP-Rule" id="MF_01661"/>
    </source>
</evidence>
<organism>
    <name type="scientific">Klebsiella pneumoniae (strain 342)</name>
    <dbReference type="NCBI Taxonomy" id="507522"/>
    <lineage>
        <taxon>Bacteria</taxon>
        <taxon>Pseudomonadati</taxon>
        <taxon>Pseudomonadota</taxon>
        <taxon>Gammaproteobacteria</taxon>
        <taxon>Enterobacterales</taxon>
        <taxon>Enterobacteriaceae</taxon>
        <taxon>Klebsiella/Raoultella group</taxon>
        <taxon>Klebsiella</taxon>
        <taxon>Klebsiella pneumoniae complex</taxon>
    </lineage>
</organism>